<name>VTS1_EMENI</name>
<gene>
    <name type="primary">vts1</name>
    <name type="ORF">AN0406</name>
</gene>
<protein>
    <recommendedName>
        <fullName>RNA-binding protein vts1</fullName>
    </recommendedName>
</protein>
<evidence type="ECO:0000250" key="1">
    <source>
        <dbReference type="UniProtKB" id="J9VVN9"/>
    </source>
</evidence>
<evidence type="ECO:0000250" key="2">
    <source>
        <dbReference type="UniProtKB" id="Q08831"/>
    </source>
</evidence>
<evidence type="ECO:0000255" key="3">
    <source>
        <dbReference type="PROSITE-ProRule" id="PRU00184"/>
    </source>
</evidence>
<evidence type="ECO:0000256" key="4">
    <source>
        <dbReference type="SAM" id="MobiDB-lite"/>
    </source>
</evidence>
<evidence type="ECO:0000305" key="5"/>
<proteinExistence type="inferred from homology"/>
<dbReference type="EMBL" id="AACD01000007">
    <property type="protein sequence ID" value="EAA66505.1"/>
    <property type="molecule type" value="Genomic_DNA"/>
</dbReference>
<dbReference type="EMBL" id="BN001308">
    <property type="protein sequence ID" value="CBF89550.1"/>
    <property type="molecule type" value="Genomic_DNA"/>
</dbReference>
<dbReference type="RefSeq" id="XP_658010.1">
    <property type="nucleotide sequence ID" value="XM_652918.1"/>
</dbReference>
<dbReference type="SMR" id="Q5BGC4"/>
<dbReference type="STRING" id="227321.Q5BGC4"/>
<dbReference type="EnsemblFungi" id="CBF89550">
    <property type="protein sequence ID" value="CBF89550"/>
    <property type="gene ID" value="ANIA_00406"/>
</dbReference>
<dbReference type="KEGG" id="ani:ANIA_00406"/>
<dbReference type="eggNOG" id="KOG3791">
    <property type="taxonomic scope" value="Eukaryota"/>
</dbReference>
<dbReference type="HOGENOM" id="CLU_017632_0_0_1"/>
<dbReference type="InParanoid" id="Q5BGC4"/>
<dbReference type="OMA" id="MSTVNNR"/>
<dbReference type="OrthoDB" id="2155283at2759"/>
<dbReference type="Proteomes" id="UP000000560">
    <property type="component" value="Chromosome VIII"/>
</dbReference>
<dbReference type="GO" id="GO:0005829">
    <property type="term" value="C:cytosol"/>
    <property type="evidence" value="ECO:0007669"/>
    <property type="project" value="UniProtKB-SubCell"/>
</dbReference>
<dbReference type="GO" id="GO:0000932">
    <property type="term" value="C:P-body"/>
    <property type="evidence" value="ECO:0000318"/>
    <property type="project" value="GO_Central"/>
</dbReference>
<dbReference type="GO" id="GO:0003729">
    <property type="term" value="F:mRNA binding"/>
    <property type="evidence" value="ECO:0000318"/>
    <property type="project" value="GO_Central"/>
</dbReference>
<dbReference type="GO" id="GO:0000166">
    <property type="term" value="F:nucleotide binding"/>
    <property type="evidence" value="ECO:0007669"/>
    <property type="project" value="UniProtKB-KW"/>
</dbReference>
<dbReference type="GO" id="GO:0000289">
    <property type="term" value="P:nuclear-transcribed mRNA poly(A) tail shortening"/>
    <property type="evidence" value="ECO:0000318"/>
    <property type="project" value="GO_Central"/>
</dbReference>
<dbReference type="GO" id="GO:0015031">
    <property type="term" value="P:protein transport"/>
    <property type="evidence" value="ECO:0007669"/>
    <property type="project" value="UniProtKB-KW"/>
</dbReference>
<dbReference type="CDD" id="cd09556">
    <property type="entry name" value="SAM_VTS1_fungal"/>
    <property type="match status" value="1"/>
</dbReference>
<dbReference type="FunFam" id="1.10.150.50:FF:000033">
    <property type="entry name" value="Protein vts1, variant"/>
    <property type="match status" value="1"/>
</dbReference>
<dbReference type="Gene3D" id="1.10.150.50">
    <property type="entry name" value="Transcription Factor, Ets-1"/>
    <property type="match status" value="1"/>
</dbReference>
<dbReference type="InterPro" id="IPR001660">
    <property type="entry name" value="SAM"/>
</dbReference>
<dbReference type="InterPro" id="IPR013761">
    <property type="entry name" value="SAM/pointed_sf"/>
</dbReference>
<dbReference type="InterPro" id="IPR050897">
    <property type="entry name" value="SMAUG/VTS1_RNA-bind"/>
</dbReference>
<dbReference type="InterPro" id="IPR037635">
    <property type="entry name" value="VTS1_SAM"/>
</dbReference>
<dbReference type="PANTHER" id="PTHR12515:SF5">
    <property type="entry name" value="PROTEIN SMAUG"/>
    <property type="match status" value="1"/>
</dbReference>
<dbReference type="PANTHER" id="PTHR12515">
    <property type="entry name" value="STERILE ALPHA MOTIF DOMAIN CONTAINING PROTEIN 4-RELATED"/>
    <property type="match status" value="1"/>
</dbReference>
<dbReference type="Pfam" id="PF07647">
    <property type="entry name" value="SAM_2"/>
    <property type="match status" value="1"/>
</dbReference>
<dbReference type="Pfam" id="PF25479">
    <property type="entry name" value="Vts1"/>
    <property type="match status" value="1"/>
</dbReference>
<dbReference type="SMART" id="SM00454">
    <property type="entry name" value="SAM"/>
    <property type="match status" value="1"/>
</dbReference>
<dbReference type="SUPFAM" id="SSF47769">
    <property type="entry name" value="SAM/Pointed domain"/>
    <property type="match status" value="1"/>
</dbReference>
<dbReference type="PROSITE" id="PS50105">
    <property type="entry name" value="SAM_DOMAIN"/>
    <property type="match status" value="1"/>
</dbReference>
<accession>Q5BGC4</accession>
<accession>C8VTI0</accession>
<sequence length="611" mass="65439">MASHIIGNRNSTPEASKSSLRPPSSSRNLATHQLRASADMSGFPSPLSSRSIRPASEVYFNQQAQTPGNAEDPLDRAAQQWLADIDQYETTLEEMAAATLDQDFKDELSAIEQWFRVLSEAERTAALYALLQQTTQVQIRFFIQVLQQMAKSHPMSGLLSPANFGEKGIDAMSNRLNDAMSKLNVDSSRNSLGRPPPSPGAKRNSGLDSSTINAMFPDAAAAIAKKKAEFTQQTGNAPPSNRNSAVFNERTSFVAPTISAPDNSADNLSQPPVSPWAQRGASEPQPPIARPKSSSGQQPMGQFNQSGLRSPLPTSQTATIPAPEIEAPLLSPYNVNASWASMTNTPMTATFGSQLGAPHQQGSDMVANATAMKLAALSTVNNRIALDDARKYRRARSNDGQGKNASNNTGAQSIQGGLASPGLPVAGQLLNAQQFAALQAQQQAAMAGHRSRPTSPGIAMQGGALGPMGFTSPQNNGFLTAYDPNNPLIGNGLGALGMGQFGLSGHEGYLSDHSEINRGRSPRGRRGSSKPPEDPTDPNLLKDIPSWLRSLRLHKYTDNLKDLKWTELIELNDKQLEERGVNALGARNKMLKVFEQVKEAKAEGKLDNATA</sequence>
<reference key="1">
    <citation type="journal article" date="2005" name="Nature">
        <title>Sequencing of Aspergillus nidulans and comparative analysis with A. fumigatus and A. oryzae.</title>
        <authorList>
            <person name="Galagan J.E."/>
            <person name="Calvo S.E."/>
            <person name="Cuomo C."/>
            <person name="Ma L.-J."/>
            <person name="Wortman J.R."/>
            <person name="Batzoglou S."/>
            <person name="Lee S.-I."/>
            <person name="Bastuerkmen M."/>
            <person name="Spevak C.C."/>
            <person name="Clutterbuck J."/>
            <person name="Kapitonov V."/>
            <person name="Jurka J."/>
            <person name="Scazzocchio C."/>
            <person name="Farman M.L."/>
            <person name="Butler J."/>
            <person name="Purcell S."/>
            <person name="Harris S."/>
            <person name="Braus G.H."/>
            <person name="Draht O."/>
            <person name="Busch S."/>
            <person name="D'Enfert C."/>
            <person name="Bouchier C."/>
            <person name="Goldman G.H."/>
            <person name="Bell-Pedersen D."/>
            <person name="Griffiths-Jones S."/>
            <person name="Doonan J.H."/>
            <person name="Yu J."/>
            <person name="Vienken K."/>
            <person name="Pain A."/>
            <person name="Freitag M."/>
            <person name="Selker E.U."/>
            <person name="Archer D.B."/>
            <person name="Penalva M.A."/>
            <person name="Oakley B.R."/>
            <person name="Momany M."/>
            <person name="Tanaka T."/>
            <person name="Kumagai T."/>
            <person name="Asai K."/>
            <person name="Machida M."/>
            <person name="Nierman W.C."/>
            <person name="Denning D.W."/>
            <person name="Caddick M.X."/>
            <person name="Hynes M."/>
            <person name="Paoletti M."/>
            <person name="Fischer R."/>
            <person name="Miller B.L."/>
            <person name="Dyer P.S."/>
            <person name="Sachs M.S."/>
            <person name="Osmani S.A."/>
            <person name="Birren B.W."/>
        </authorList>
    </citation>
    <scope>NUCLEOTIDE SEQUENCE [LARGE SCALE GENOMIC DNA]</scope>
    <source>
        <strain>FGSC A4 / ATCC 38163 / CBS 112.46 / NRRL 194 / M139</strain>
    </source>
</reference>
<reference key="2">
    <citation type="journal article" date="2009" name="Fungal Genet. Biol.">
        <title>The 2008 update of the Aspergillus nidulans genome annotation: a community effort.</title>
        <authorList>
            <person name="Wortman J.R."/>
            <person name="Gilsenan J.M."/>
            <person name="Joardar V."/>
            <person name="Deegan J."/>
            <person name="Clutterbuck J."/>
            <person name="Andersen M.R."/>
            <person name="Archer D."/>
            <person name="Bencina M."/>
            <person name="Braus G."/>
            <person name="Coutinho P."/>
            <person name="von Dohren H."/>
            <person name="Doonan J."/>
            <person name="Driessen A.J."/>
            <person name="Durek P."/>
            <person name="Espeso E."/>
            <person name="Fekete E."/>
            <person name="Flipphi M."/>
            <person name="Estrada C.G."/>
            <person name="Geysens S."/>
            <person name="Goldman G."/>
            <person name="de Groot P.W."/>
            <person name="Hansen K."/>
            <person name="Harris S.D."/>
            <person name="Heinekamp T."/>
            <person name="Helmstaedt K."/>
            <person name="Henrissat B."/>
            <person name="Hofmann G."/>
            <person name="Homan T."/>
            <person name="Horio T."/>
            <person name="Horiuchi H."/>
            <person name="James S."/>
            <person name="Jones M."/>
            <person name="Karaffa L."/>
            <person name="Karanyi Z."/>
            <person name="Kato M."/>
            <person name="Keller N."/>
            <person name="Kelly D.E."/>
            <person name="Kiel J.A."/>
            <person name="Kim J.M."/>
            <person name="van der Klei I.J."/>
            <person name="Klis F.M."/>
            <person name="Kovalchuk A."/>
            <person name="Krasevec N."/>
            <person name="Kubicek C.P."/>
            <person name="Liu B."/>
            <person name="Maccabe A."/>
            <person name="Meyer V."/>
            <person name="Mirabito P."/>
            <person name="Miskei M."/>
            <person name="Mos M."/>
            <person name="Mullins J."/>
            <person name="Nelson D.R."/>
            <person name="Nielsen J."/>
            <person name="Oakley B.R."/>
            <person name="Osmani S.A."/>
            <person name="Pakula T."/>
            <person name="Paszewski A."/>
            <person name="Paulsen I."/>
            <person name="Pilsyk S."/>
            <person name="Pocsi I."/>
            <person name="Punt P.J."/>
            <person name="Ram A.F."/>
            <person name="Ren Q."/>
            <person name="Robellet X."/>
            <person name="Robson G."/>
            <person name="Seiboth B."/>
            <person name="van Solingen P."/>
            <person name="Specht T."/>
            <person name="Sun J."/>
            <person name="Taheri-Talesh N."/>
            <person name="Takeshita N."/>
            <person name="Ussery D."/>
            <person name="vanKuyk P.A."/>
            <person name="Visser H."/>
            <person name="van de Vondervoort P.J."/>
            <person name="de Vries R.P."/>
            <person name="Walton J."/>
            <person name="Xiang X."/>
            <person name="Xiong Y."/>
            <person name="Zeng A.P."/>
            <person name="Brandt B.W."/>
            <person name="Cornell M.J."/>
            <person name="van den Hondel C.A."/>
            <person name="Visser J."/>
            <person name="Oliver S.G."/>
            <person name="Turner G."/>
        </authorList>
    </citation>
    <scope>GENOME REANNOTATION</scope>
    <source>
        <strain>FGSC A4 / ATCC 38163 / CBS 112.46 / NRRL 194 / M139</strain>
    </source>
</reference>
<comment type="function">
    <text evidence="2">RNA-binding protein involved in post-transcriptional regulation through transcript degradation.</text>
</comment>
<comment type="subunit">
    <text evidence="2">Monomer. Binds to RNA.</text>
</comment>
<comment type="subcellular location">
    <subcellularLocation>
        <location evidence="2">Cytoplasm</location>
        <location evidence="2">Cytosol</location>
    </subcellularLocation>
    <subcellularLocation>
        <location evidence="1">Cytoplasm</location>
        <location evidence="1">P-body</location>
    </subcellularLocation>
</comment>
<comment type="similarity">
    <text evidence="5">Belongs to the VTS1 family.</text>
</comment>
<organism>
    <name type="scientific">Emericella nidulans (strain FGSC A4 / ATCC 38163 / CBS 112.46 / NRRL 194 / M139)</name>
    <name type="common">Aspergillus nidulans</name>
    <dbReference type="NCBI Taxonomy" id="227321"/>
    <lineage>
        <taxon>Eukaryota</taxon>
        <taxon>Fungi</taxon>
        <taxon>Dikarya</taxon>
        <taxon>Ascomycota</taxon>
        <taxon>Pezizomycotina</taxon>
        <taxon>Eurotiomycetes</taxon>
        <taxon>Eurotiomycetidae</taxon>
        <taxon>Eurotiales</taxon>
        <taxon>Aspergillaceae</taxon>
        <taxon>Aspergillus</taxon>
        <taxon>Aspergillus subgen. Nidulantes</taxon>
    </lineage>
</organism>
<feature type="chain" id="PRO_0000081451" description="RNA-binding protein vts1">
    <location>
        <begin position="1"/>
        <end position="611"/>
    </location>
</feature>
<feature type="domain" description="SAM" evidence="3">
    <location>
        <begin position="539"/>
        <end position="600"/>
    </location>
</feature>
<feature type="region of interest" description="Disordered" evidence="4">
    <location>
        <begin position="1"/>
        <end position="49"/>
    </location>
</feature>
<feature type="region of interest" description="Disordered" evidence="4">
    <location>
        <begin position="185"/>
        <end position="211"/>
    </location>
</feature>
<feature type="region of interest" description="Disordered" evidence="4">
    <location>
        <begin position="227"/>
        <end position="246"/>
    </location>
</feature>
<feature type="region of interest" description="Disordered" evidence="4">
    <location>
        <begin position="257"/>
        <end position="318"/>
    </location>
</feature>
<feature type="region of interest" description="Disordered" evidence="4">
    <location>
        <begin position="393"/>
        <end position="416"/>
    </location>
</feature>
<feature type="region of interest" description="Disordered" evidence="4">
    <location>
        <begin position="509"/>
        <end position="542"/>
    </location>
</feature>
<feature type="compositionally biased region" description="Low complexity" evidence="4">
    <location>
        <begin position="16"/>
        <end position="27"/>
    </location>
</feature>
<feature type="compositionally biased region" description="Polar residues" evidence="4">
    <location>
        <begin position="230"/>
        <end position="246"/>
    </location>
</feature>
<feature type="compositionally biased region" description="Polar residues" evidence="4">
    <location>
        <begin position="260"/>
        <end position="271"/>
    </location>
</feature>
<feature type="compositionally biased region" description="Polar residues" evidence="4">
    <location>
        <begin position="292"/>
        <end position="318"/>
    </location>
</feature>
<feature type="compositionally biased region" description="Polar residues" evidence="4">
    <location>
        <begin position="398"/>
        <end position="415"/>
    </location>
</feature>
<feature type="compositionally biased region" description="Basic and acidic residues" evidence="4">
    <location>
        <begin position="509"/>
        <end position="518"/>
    </location>
</feature>
<keyword id="KW-0963">Cytoplasm</keyword>
<keyword id="KW-0547">Nucleotide-binding</keyword>
<keyword id="KW-0653">Protein transport</keyword>
<keyword id="KW-1185">Reference proteome</keyword>
<keyword id="KW-0694">RNA-binding</keyword>
<keyword id="KW-0813">Transport</keyword>